<name>SYN_SHELP</name>
<comment type="catalytic activity">
    <reaction evidence="1">
        <text>tRNA(Asn) + L-asparagine + ATP = L-asparaginyl-tRNA(Asn) + AMP + diphosphate + H(+)</text>
        <dbReference type="Rhea" id="RHEA:11180"/>
        <dbReference type="Rhea" id="RHEA-COMP:9659"/>
        <dbReference type="Rhea" id="RHEA-COMP:9674"/>
        <dbReference type="ChEBI" id="CHEBI:15378"/>
        <dbReference type="ChEBI" id="CHEBI:30616"/>
        <dbReference type="ChEBI" id="CHEBI:33019"/>
        <dbReference type="ChEBI" id="CHEBI:58048"/>
        <dbReference type="ChEBI" id="CHEBI:78442"/>
        <dbReference type="ChEBI" id="CHEBI:78515"/>
        <dbReference type="ChEBI" id="CHEBI:456215"/>
        <dbReference type="EC" id="6.1.1.22"/>
    </reaction>
</comment>
<comment type="subunit">
    <text evidence="1">Homodimer.</text>
</comment>
<comment type="subcellular location">
    <subcellularLocation>
        <location evidence="1">Cytoplasm</location>
    </subcellularLocation>
</comment>
<comment type="similarity">
    <text evidence="1">Belongs to the class-II aminoacyl-tRNA synthetase family.</text>
</comment>
<evidence type="ECO:0000255" key="1">
    <source>
        <dbReference type="HAMAP-Rule" id="MF_00534"/>
    </source>
</evidence>
<feature type="chain" id="PRO_1000051424" description="Asparagine--tRNA ligase">
    <location>
        <begin position="1"/>
        <end position="466"/>
    </location>
</feature>
<protein>
    <recommendedName>
        <fullName evidence="1">Asparagine--tRNA ligase</fullName>
        <ecNumber evidence="1">6.1.1.22</ecNumber>
    </recommendedName>
    <alternativeName>
        <fullName evidence="1">Asparaginyl-tRNA synthetase</fullName>
        <shortName evidence="1">AsnRS</shortName>
    </alternativeName>
</protein>
<dbReference type="EC" id="6.1.1.22" evidence="1"/>
<dbReference type="EMBL" id="CP000606">
    <property type="protein sequence ID" value="ABO23766.1"/>
    <property type="molecule type" value="Genomic_DNA"/>
</dbReference>
<dbReference type="RefSeq" id="WP_011865698.1">
    <property type="nucleotide sequence ID" value="NC_009092.1"/>
</dbReference>
<dbReference type="SMR" id="A3QE68"/>
<dbReference type="STRING" id="323850.Shew_1900"/>
<dbReference type="KEGG" id="slo:Shew_1900"/>
<dbReference type="eggNOG" id="COG0017">
    <property type="taxonomic scope" value="Bacteria"/>
</dbReference>
<dbReference type="HOGENOM" id="CLU_004553_2_0_6"/>
<dbReference type="OrthoDB" id="9762036at2"/>
<dbReference type="Proteomes" id="UP000001558">
    <property type="component" value="Chromosome"/>
</dbReference>
<dbReference type="GO" id="GO:0005737">
    <property type="term" value="C:cytoplasm"/>
    <property type="evidence" value="ECO:0007669"/>
    <property type="project" value="UniProtKB-SubCell"/>
</dbReference>
<dbReference type="GO" id="GO:0004816">
    <property type="term" value="F:asparagine-tRNA ligase activity"/>
    <property type="evidence" value="ECO:0007669"/>
    <property type="project" value="UniProtKB-UniRule"/>
</dbReference>
<dbReference type="GO" id="GO:0005524">
    <property type="term" value="F:ATP binding"/>
    <property type="evidence" value="ECO:0007669"/>
    <property type="project" value="UniProtKB-UniRule"/>
</dbReference>
<dbReference type="GO" id="GO:0003676">
    <property type="term" value="F:nucleic acid binding"/>
    <property type="evidence" value="ECO:0007669"/>
    <property type="project" value="InterPro"/>
</dbReference>
<dbReference type="GO" id="GO:0006421">
    <property type="term" value="P:asparaginyl-tRNA aminoacylation"/>
    <property type="evidence" value="ECO:0007669"/>
    <property type="project" value="UniProtKB-UniRule"/>
</dbReference>
<dbReference type="CDD" id="cd00776">
    <property type="entry name" value="AsxRS_core"/>
    <property type="match status" value="1"/>
</dbReference>
<dbReference type="CDD" id="cd04318">
    <property type="entry name" value="EcAsnRS_like_N"/>
    <property type="match status" value="1"/>
</dbReference>
<dbReference type="FunFam" id="3.30.930.10:FF:000016">
    <property type="entry name" value="Asparagine--tRNA ligase"/>
    <property type="match status" value="1"/>
</dbReference>
<dbReference type="Gene3D" id="3.30.930.10">
    <property type="entry name" value="Bira Bifunctional Protein, Domain 2"/>
    <property type="match status" value="1"/>
</dbReference>
<dbReference type="Gene3D" id="2.40.50.140">
    <property type="entry name" value="Nucleic acid-binding proteins"/>
    <property type="match status" value="1"/>
</dbReference>
<dbReference type="HAMAP" id="MF_00534">
    <property type="entry name" value="Asn_tRNA_synth"/>
    <property type="match status" value="1"/>
</dbReference>
<dbReference type="InterPro" id="IPR004364">
    <property type="entry name" value="Aa-tRNA-synt_II"/>
</dbReference>
<dbReference type="InterPro" id="IPR006195">
    <property type="entry name" value="aa-tRNA-synth_II"/>
</dbReference>
<dbReference type="InterPro" id="IPR045864">
    <property type="entry name" value="aa-tRNA-synth_II/BPL/LPL"/>
</dbReference>
<dbReference type="InterPro" id="IPR004522">
    <property type="entry name" value="Asn-tRNA-ligase"/>
</dbReference>
<dbReference type="InterPro" id="IPR002312">
    <property type="entry name" value="Asp/Asn-tRNA-synth_IIb"/>
</dbReference>
<dbReference type="InterPro" id="IPR012340">
    <property type="entry name" value="NA-bd_OB-fold"/>
</dbReference>
<dbReference type="InterPro" id="IPR004365">
    <property type="entry name" value="NA-bd_OB_tRNA"/>
</dbReference>
<dbReference type="NCBIfam" id="TIGR00457">
    <property type="entry name" value="asnS"/>
    <property type="match status" value="1"/>
</dbReference>
<dbReference type="NCBIfam" id="NF003037">
    <property type="entry name" value="PRK03932.1"/>
    <property type="match status" value="1"/>
</dbReference>
<dbReference type="PANTHER" id="PTHR22594:SF34">
    <property type="entry name" value="ASPARAGINE--TRNA LIGASE, MITOCHONDRIAL-RELATED"/>
    <property type="match status" value="1"/>
</dbReference>
<dbReference type="PANTHER" id="PTHR22594">
    <property type="entry name" value="ASPARTYL/LYSYL-TRNA SYNTHETASE"/>
    <property type="match status" value="1"/>
</dbReference>
<dbReference type="Pfam" id="PF00152">
    <property type="entry name" value="tRNA-synt_2"/>
    <property type="match status" value="1"/>
</dbReference>
<dbReference type="Pfam" id="PF01336">
    <property type="entry name" value="tRNA_anti-codon"/>
    <property type="match status" value="1"/>
</dbReference>
<dbReference type="PRINTS" id="PR01042">
    <property type="entry name" value="TRNASYNTHASP"/>
</dbReference>
<dbReference type="SUPFAM" id="SSF55681">
    <property type="entry name" value="Class II aaRS and biotin synthetases"/>
    <property type="match status" value="1"/>
</dbReference>
<dbReference type="SUPFAM" id="SSF50249">
    <property type="entry name" value="Nucleic acid-binding proteins"/>
    <property type="match status" value="1"/>
</dbReference>
<dbReference type="PROSITE" id="PS50862">
    <property type="entry name" value="AA_TRNA_LIGASE_II"/>
    <property type="match status" value="1"/>
</dbReference>
<organism>
    <name type="scientific">Shewanella loihica (strain ATCC BAA-1088 / PV-4)</name>
    <dbReference type="NCBI Taxonomy" id="323850"/>
    <lineage>
        <taxon>Bacteria</taxon>
        <taxon>Pseudomonadati</taxon>
        <taxon>Pseudomonadota</taxon>
        <taxon>Gammaproteobacteria</taxon>
        <taxon>Alteromonadales</taxon>
        <taxon>Shewanellaceae</taxon>
        <taxon>Shewanella</taxon>
    </lineage>
</organism>
<sequence length="466" mass="52495">MSIASVASVFKGDFAVGSQVTVRGWVRTRRDSKAGISFLAVYDGSCFDPIQGVVPNSLDNYNDEILRLTAGCSVVMTGELVESPGKGQAFEMQVTKVEVTGWVEDPDTYPMAAKRHSIEHLRELAHLRPRTNIIGAVARVRNCLSHAIHNFYNEEGFIWVSTPLITASDCEGAGEMFRVSTLDLENLPRTDDGKVDFSEDFFGKESFLTVSGQLNGETYACALSKIYTFGPTFRAENSNTSRHLAEFWMVEPEVAFADLNDVAGLAERMLKYCFRAVLNERRDDLEFFAQRVDKTVIERLESFVNSDFAQVDYTDAIEILKSCGKKFEFDVEWGIDLQSEHERYLAEEHFKAPVVVKNYPKDIKAFYMRLNEDGKTVAAMDVLAPGIGEIIGGAQREERLDVLDTRLDEMGLSKEDYWWYRDLRRYGTVPHSGFGLGFERLVSYVTGVSNIRDVIPFPRAPKSANF</sequence>
<keyword id="KW-0030">Aminoacyl-tRNA synthetase</keyword>
<keyword id="KW-0067">ATP-binding</keyword>
<keyword id="KW-0963">Cytoplasm</keyword>
<keyword id="KW-0436">Ligase</keyword>
<keyword id="KW-0547">Nucleotide-binding</keyword>
<keyword id="KW-0648">Protein biosynthesis</keyword>
<keyword id="KW-1185">Reference proteome</keyword>
<reference key="1">
    <citation type="submission" date="2007-03" db="EMBL/GenBank/DDBJ databases">
        <title>Complete sequence of Shewanella loihica PV-4.</title>
        <authorList>
            <consortium name="US DOE Joint Genome Institute"/>
            <person name="Copeland A."/>
            <person name="Lucas S."/>
            <person name="Lapidus A."/>
            <person name="Barry K."/>
            <person name="Detter J.C."/>
            <person name="Glavina del Rio T."/>
            <person name="Hammon N."/>
            <person name="Israni S."/>
            <person name="Dalin E."/>
            <person name="Tice H."/>
            <person name="Pitluck S."/>
            <person name="Chain P."/>
            <person name="Malfatti S."/>
            <person name="Shin M."/>
            <person name="Vergez L."/>
            <person name="Schmutz J."/>
            <person name="Larimer F."/>
            <person name="Land M."/>
            <person name="Hauser L."/>
            <person name="Kyrpides N."/>
            <person name="Mikhailova N."/>
            <person name="Romine M.F."/>
            <person name="Serres G."/>
            <person name="Fredrickson J."/>
            <person name="Tiedje J."/>
            <person name="Richardson P."/>
        </authorList>
    </citation>
    <scope>NUCLEOTIDE SEQUENCE [LARGE SCALE GENOMIC DNA]</scope>
    <source>
        <strain>ATCC BAA-1088 / PV-4</strain>
    </source>
</reference>
<gene>
    <name evidence="1" type="primary">asnS</name>
    <name type="ordered locus">Shew_1900</name>
</gene>
<accession>A3QE68</accession>
<proteinExistence type="inferred from homology"/>